<sequence>MVLLCKYKVSWVFVLSVAGSSLIRDFLFGQDDSLSIEKRTNEYTTPEYGGTSHCNGGDKNCYPQCFDHRGQPKKDKCCFDKHNKVLYPYPCTSSSSSSSSSSTVSSSSSEVISSSSEEASSSEITSSSEISSSSEVSSSSEVLSSSEIISSSSEVVSSSSKVSSSSEATSSSSEIISSSSEVVSSSSQVTSSSEVVSSSSEVVSSSSEVSSSSEVVSSSSEVSSSSEVSSSSEVSSSSQVTSSSEIVSSSSEVSSSSSEVVSSSSEVSSSSEVVSSSSEVSSSSEVSSSSEVSSSSEVSSSSEVSSSSQVISSSEVVSSSSEVVSSSSEVSSSSEVSSSSEVVSSSSEVSSSSEVSSSSEVSSSSQVTSSSEIVSSSSEVSSSSSEVVSSSSEVSSSSEVVSSSSEVSSSSEVSSSSEVSSSSEVSSSSEVSSSSQVTSSSEVVSSSSEVSSSSEVVSSSSEVSSSSEVSSSSEVSSSSQVTSSSEIVSSSSEVSSSSSEVVSSSSEVSSSSEVVSSSSEVSSSSEVSSSSEVSSSSQVTSSSEIVSSSSEVSSSSSEVVSSSSEVSSSSEVVSSSSEVSSSSEVSSSSEVSSSSQVTSSSEVVSSSSEVVSSSSEVSSSSEVSSSSEVSSSSEVSSSSEVSSSSQVTSSSEIVSSSSEVSSSSSEVVSSSSEVSSSSEVVSSSSEVSSSSEVSSSSEVSSSSQVTSSSEVVSSSSEVVSSSSEVSSSSEVSSSSEVSSSSEVSSSSEVSSSSEVTSSSSEIISSSSSSEVTSSSEVSSSSQATSSSSEIISSSSKVSSSSEITSSSECISSTSEVNSSSSEVVSSSSASSEVVSSSTECISSSSEAISSSSQVTSSSTECISSSSEVISSSEVTSCSSEVVSSSETCISSKEMSSSEQISSSESTSSCSEFVSKSSEHSSLSSESCPSEETSTVSETSSETVTCKHHGCSKTKTHHSTPTKCVTKTIETSVYVTTCPDKSITTETAVVIVVTNESTATTYTEIIKTTVIEGNTLTTNIPIKHVETETAEIIEYTTICPTTLPNGHKTTVIAGIAVGTNGQGQKVTKTVPLEYNESTLANGHVTRVASGIVKATGENGEEITKTIPIEYRKTTERIEFITVCPTTLANGQVIETTAGIVITTNKQGEKVTKPVPLEFTSTIEFSHHLTTHPVTLPNGQITVTTEGVIITRKGEQQFTKTVEVGNLPSKPIEVVQKISVVPKTLPNSQVTSETVAILVTVGEELQPITKTIPIGTSAQETEPSFASYSEIVFTTCSEGGCNTYTTNVEVIGNKVITKQSGKPIVEEQTTNGIEHQSDKVYYTVVSGETKTIQTPGSIVSTSPAAIPVVTSKGSPNIVGSSVVAGSSVTTSEVSTSTAGVLQGNAASRQSFNYKFIVGLILAYIIA</sequence>
<accession>Q59SG9</accession>
<accession>A0A1D8PIB4</accession>
<accession>Q59SD7</accession>
<proteinExistence type="evidence at protein level"/>
<protein>
    <recommendedName>
        <fullName>Probable GPI-anchored adhesin-like protein PGA55</fullName>
    </recommendedName>
    <alternativeName>
        <fullName>Predicted GPI-anchored protein 55</fullName>
    </alternativeName>
</protein>
<reference key="1">
    <citation type="journal article" date="2004" name="Proc. Natl. Acad. Sci. U.S.A.">
        <title>The diploid genome sequence of Candida albicans.</title>
        <authorList>
            <person name="Jones T."/>
            <person name="Federspiel N.A."/>
            <person name="Chibana H."/>
            <person name="Dungan J."/>
            <person name="Kalman S."/>
            <person name="Magee B.B."/>
            <person name="Newport G."/>
            <person name="Thorstenson Y.R."/>
            <person name="Agabian N."/>
            <person name="Magee P.T."/>
            <person name="Davis R.W."/>
            <person name="Scherer S."/>
        </authorList>
    </citation>
    <scope>NUCLEOTIDE SEQUENCE [LARGE SCALE GENOMIC DNA]</scope>
    <source>
        <strain>SC5314 / ATCC MYA-2876</strain>
    </source>
</reference>
<reference key="2">
    <citation type="journal article" date="2007" name="Genome Biol.">
        <title>Assembly of the Candida albicans genome into sixteen supercontigs aligned on the eight chromosomes.</title>
        <authorList>
            <person name="van het Hoog M."/>
            <person name="Rast T.J."/>
            <person name="Martchenko M."/>
            <person name="Grindle S."/>
            <person name="Dignard D."/>
            <person name="Hogues H."/>
            <person name="Cuomo C."/>
            <person name="Berriman M."/>
            <person name="Scherer S."/>
            <person name="Magee B.B."/>
            <person name="Whiteway M."/>
            <person name="Chibana H."/>
            <person name="Nantel A."/>
            <person name="Magee P.T."/>
        </authorList>
    </citation>
    <scope>GENOME REANNOTATION</scope>
    <source>
        <strain>SC5314 / ATCC MYA-2876</strain>
    </source>
</reference>
<reference key="3">
    <citation type="journal article" date="2013" name="Genome Biol.">
        <title>Assembly of a phased diploid Candida albicans genome facilitates allele-specific measurements and provides a simple model for repeat and indel structure.</title>
        <authorList>
            <person name="Muzzey D."/>
            <person name="Schwartz K."/>
            <person name="Weissman J.S."/>
            <person name="Sherlock G."/>
        </authorList>
    </citation>
    <scope>NUCLEOTIDE SEQUENCE [LARGE SCALE GENOMIC DNA]</scope>
    <scope>GENOME REANNOTATION</scope>
    <source>
        <strain>SC5314 / ATCC MYA-2876</strain>
    </source>
</reference>
<reference key="4">
    <citation type="journal article" date="2003" name="Yeast">
        <title>Genome-wide identification of fungal GPI proteins.</title>
        <authorList>
            <person name="De Groot P.W."/>
            <person name="Hellingwerf K.J."/>
            <person name="Klis F.M."/>
        </authorList>
    </citation>
    <scope>PREDICTION OF GPI-ANCHOR</scope>
</reference>
<reference key="5">
    <citation type="journal article" date="2005" name="Mol. Biol. Cell">
        <title>Induction of the Candida albicans filamentous growth program by relief of transcriptional repression: a genome-wide analysis.</title>
        <authorList>
            <person name="Kadosh D."/>
            <person name="Johnson A.D."/>
        </authorList>
    </citation>
    <scope>INDUCTION</scope>
</reference>
<reference key="6">
    <citation type="journal article" date="2009" name="PLoS Genet.">
        <title>An RNA transport system in Candida albicans regulates hyphal morphology and invasive growth.</title>
        <authorList>
            <person name="Elson S.L."/>
            <person name="Noble S.M."/>
            <person name="Solis N.V."/>
            <person name="Filler S.G."/>
            <person name="Johnson A.D."/>
        </authorList>
    </citation>
    <scope>SUBCELLULAR LOCATION</scope>
    <scope>MRNA TRANSPORT</scope>
</reference>
<reference key="7">
    <citation type="journal article" date="2011" name="BMC Genomics">
        <title>FungalRV: adhesin prediction and immunoinformatics portal for human fungal pathogens.</title>
        <authorList>
            <person name="Chaudhuri R."/>
            <person name="Ansari F.A."/>
            <person name="Raghunandanan M.V."/>
            <person name="Ramachandran S."/>
        </authorList>
    </citation>
    <scope>FUNCTION</scope>
</reference>
<reference key="8">
    <citation type="journal article" date="2013" name="PLoS ONE">
        <title>Global transcriptome sequencing identifies chlamydospore specific markers in Candida albicans and Candida dubliniensis.</title>
        <authorList>
            <person name="Palige K."/>
            <person name="Linde J."/>
            <person name="Martin R."/>
            <person name="Bottcher B."/>
            <person name="Citiulo F."/>
            <person name="Sullivan D.J."/>
            <person name="Weber J."/>
            <person name="Staib C."/>
            <person name="Rupp S."/>
            <person name="Hube B."/>
            <person name="Morschhauser J."/>
            <person name="Staib P."/>
        </authorList>
    </citation>
    <scope>INDUCTION</scope>
</reference>
<gene>
    <name type="primary">PGA55</name>
    <name type="ordered locus">CAALFM_C208980CA</name>
    <name type="ORF">CaO19.207</name>
    <name type="ORF">CaO19.7838</name>
</gene>
<evidence type="ECO:0000255" key="1"/>
<evidence type="ECO:0000256" key="2">
    <source>
        <dbReference type="SAM" id="MobiDB-lite"/>
    </source>
</evidence>
<evidence type="ECO:0000269" key="3">
    <source>
    </source>
</evidence>
<evidence type="ECO:0000269" key="4">
    <source>
    </source>
</evidence>
<evidence type="ECO:0000269" key="5">
    <source>
    </source>
</evidence>
<evidence type="ECO:0000269" key="6">
    <source>
    </source>
</evidence>
<evidence type="ECO:0000305" key="7"/>
<comment type="function">
    <text evidence="5">Predicted GPI-anchored adhesin-like protein which may be involved in filamentous growth and chlamydospore formation.</text>
</comment>
<comment type="subcellular location">
    <subcellularLocation>
        <location evidence="7">Cell membrane</location>
        <topology evidence="7">Lipid-anchor</topology>
        <topology evidence="7">GPI-anchor</topology>
    </subcellularLocation>
    <text evidence="4">Accumulates in the bud of yeast cells and in the distal end of the germ tube and hyphal tip cell.</text>
</comment>
<comment type="induction">
    <text evidence="3 6">Induced during chlamydospore formation and filamentous growth. Expression is regulated by the NRG1 and TUP1 transcription factors.</text>
</comment>
<comment type="miscellaneous">
    <text>The PGA55 mRNA is transported by SHE3 to bud in yeast cells, as well as to the hyphal tips during filamentous growth.</text>
</comment>
<keyword id="KW-1003">Cell membrane</keyword>
<keyword id="KW-0325">Glycoprotein</keyword>
<keyword id="KW-0336">GPI-anchor</keyword>
<keyword id="KW-0449">Lipoprotein</keyword>
<keyword id="KW-0472">Membrane</keyword>
<keyword id="KW-1185">Reference proteome</keyword>
<keyword id="KW-0677">Repeat</keyword>
<keyword id="KW-0732">Signal</keyword>
<feature type="signal peptide" evidence="1">
    <location>
        <begin position="1"/>
        <end position="19"/>
    </location>
</feature>
<feature type="chain" id="PRO_0000424917" description="Probable GPI-anchored adhesin-like protein PGA55">
    <location>
        <begin position="20"/>
        <end position="1382"/>
    </location>
</feature>
<feature type="propeptide" id="PRO_0000424918" description="Removed in mature form" evidence="1">
    <location>
        <begin position="1383"/>
        <end position="1404"/>
    </location>
</feature>
<feature type="repeat" description="1-1">
    <location>
        <begin position="104"/>
        <end position="109"/>
    </location>
</feature>
<feature type="repeat" description="1-2">
    <location>
        <begin position="136"/>
        <end position="141"/>
    </location>
</feature>
<feature type="repeat" description="1-3">
    <location>
        <begin position="156"/>
        <end position="161"/>
    </location>
</feature>
<feature type="repeat" description="1-4">
    <location>
        <begin position="162"/>
        <end position="167"/>
    </location>
</feature>
<feature type="repeat" description="1-5">
    <location>
        <begin position="183"/>
        <end position="188"/>
    </location>
</feature>
<feature type="repeat" description="1-6">
    <location>
        <begin position="196"/>
        <end position="201"/>
    </location>
</feature>
<feature type="repeat" description="1-7">
    <location>
        <begin position="203"/>
        <end position="208"/>
    </location>
</feature>
<feature type="repeat" description="1-8">
    <location>
        <begin position="209"/>
        <end position="214"/>
    </location>
</feature>
<feature type="repeat" description="1-9">
    <location>
        <begin position="216"/>
        <end position="221"/>
    </location>
</feature>
<feature type="repeat" description="1-10">
    <location>
        <begin position="222"/>
        <end position="227"/>
    </location>
</feature>
<feature type="repeat" description="1-11">
    <location>
        <begin position="228"/>
        <end position="233"/>
    </location>
</feature>
<feature type="repeat" description="1-12">
    <location>
        <begin position="234"/>
        <end position="239"/>
    </location>
</feature>
<feature type="repeat" description="1-13">
    <location>
        <begin position="247"/>
        <end position="252"/>
    </location>
</feature>
<feature type="repeat" description="1-14">
    <location>
        <begin position="253"/>
        <end position="258"/>
    </location>
</feature>
<feature type="repeat" description="1-15">
    <location>
        <begin position="261"/>
        <end position="266"/>
    </location>
</feature>
<feature type="repeat" description="1-16">
    <location>
        <begin position="267"/>
        <end position="272"/>
    </location>
</feature>
<feature type="repeat" description="1-17">
    <location>
        <begin position="274"/>
        <end position="279"/>
    </location>
</feature>
<feature type="repeat" description="1-18">
    <location>
        <begin position="280"/>
        <end position="285"/>
    </location>
</feature>
<feature type="repeat" description="1-19">
    <location>
        <begin position="286"/>
        <end position="291"/>
    </location>
</feature>
<feature type="repeat" description="1-20">
    <location>
        <begin position="292"/>
        <end position="297"/>
    </location>
</feature>
<feature type="repeat" description="1-21">
    <location>
        <begin position="298"/>
        <end position="303"/>
    </location>
</feature>
<feature type="repeat" description="1-22">
    <location>
        <begin position="304"/>
        <end position="309"/>
    </location>
</feature>
<feature type="repeat" description="1-23">
    <location>
        <begin position="317"/>
        <end position="322"/>
    </location>
</feature>
<feature type="repeat" description="1-24">
    <location>
        <begin position="324"/>
        <end position="329"/>
    </location>
</feature>
<feature type="repeat" description="1-25">
    <location>
        <begin position="330"/>
        <end position="335"/>
    </location>
</feature>
<feature type="repeat" description="1-26">
    <location>
        <begin position="336"/>
        <end position="341"/>
    </location>
</feature>
<feature type="repeat" description="1-27">
    <location>
        <begin position="343"/>
        <end position="348"/>
    </location>
</feature>
<feature type="repeat" description="1-28">
    <location>
        <begin position="349"/>
        <end position="354"/>
    </location>
</feature>
<feature type="repeat" description="1-29">
    <location>
        <begin position="355"/>
        <end position="360"/>
    </location>
</feature>
<feature type="repeat" description="1-30">
    <location>
        <begin position="361"/>
        <end position="366"/>
    </location>
</feature>
<feature type="repeat" description="1-31">
    <location>
        <begin position="374"/>
        <end position="379"/>
    </location>
</feature>
<feature type="repeat" description="1-32">
    <location>
        <begin position="380"/>
        <end position="385"/>
    </location>
</feature>
<feature type="repeat" description="1-33">
    <location>
        <begin position="388"/>
        <end position="393"/>
    </location>
</feature>
<feature type="repeat" description="1-34">
    <location>
        <begin position="394"/>
        <end position="399"/>
    </location>
</feature>
<feature type="repeat" description="1-35">
    <location>
        <begin position="401"/>
        <end position="406"/>
    </location>
</feature>
<feature type="repeat" description="1-36">
    <location>
        <begin position="407"/>
        <end position="412"/>
    </location>
</feature>
<feature type="repeat" description="1-37">
    <location>
        <begin position="413"/>
        <end position="418"/>
    </location>
</feature>
<feature type="repeat" description="1-38">
    <location>
        <begin position="419"/>
        <end position="424"/>
    </location>
</feature>
<feature type="repeat" description="1-39">
    <location>
        <begin position="425"/>
        <end position="430"/>
    </location>
</feature>
<feature type="repeat" description="1-40">
    <location>
        <begin position="431"/>
        <end position="436"/>
    </location>
</feature>
<feature type="repeat" description="1-41">
    <location>
        <begin position="444"/>
        <end position="449"/>
    </location>
</feature>
<feature type="repeat" description="1-42">
    <location>
        <begin position="450"/>
        <end position="455"/>
    </location>
</feature>
<feature type="repeat" description="1-43">
    <location>
        <begin position="457"/>
        <end position="462"/>
    </location>
</feature>
<feature type="repeat" description="1-44">
    <location>
        <begin position="463"/>
        <end position="468"/>
    </location>
</feature>
<feature type="repeat" description="1-45">
    <location>
        <begin position="469"/>
        <end position="474"/>
    </location>
</feature>
<feature type="repeat" description="1-46">
    <location>
        <begin position="475"/>
        <end position="480"/>
    </location>
</feature>
<feature type="repeat" description="1-47">
    <location>
        <begin position="488"/>
        <end position="493"/>
    </location>
</feature>
<feature type="repeat" description="1-48">
    <location>
        <begin position="494"/>
        <end position="500"/>
    </location>
</feature>
<feature type="repeat" description="1-49">
    <location>
        <begin position="502"/>
        <end position="507"/>
    </location>
</feature>
<feature type="repeat" description="1-50">
    <location>
        <begin position="508"/>
        <end position="513"/>
    </location>
</feature>
<feature type="repeat" description="1-51">
    <location>
        <begin position="515"/>
        <end position="520"/>
    </location>
</feature>
<feature type="repeat" description="1-52">
    <location>
        <begin position="521"/>
        <end position="526"/>
    </location>
</feature>
<feature type="repeat" description="1-53">
    <location>
        <begin position="527"/>
        <end position="532"/>
    </location>
</feature>
<feature type="repeat" description="1-54">
    <location>
        <begin position="533"/>
        <end position="538"/>
    </location>
</feature>
<feature type="repeat" description="1-55">
    <location>
        <begin position="546"/>
        <end position="551"/>
    </location>
</feature>
<feature type="repeat" description="1-56">
    <location>
        <begin position="552"/>
        <end position="557"/>
    </location>
</feature>
<feature type="repeat" description="1-57">
    <location>
        <begin position="560"/>
        <end position="565"/>
    </location>
</feature>
<feature type="repeat" description="1-58">
    <location>
        <begin position="566"/>
        <end position="571"/>
    </location>
</feature>
<feature type="repeat" description="1-59">
    <location>
        <begin position="573"/>
        <end position="578"/>
    </location>
</feature>
<feature type="repeat" description="1-60">
    <location>
        <begin position="579"/>
        <end position="584"/>
    </location>
</feature>
<feature type="repeat" description="1-61">
    <location>
        <begin position="585"/>
        <end position="590"/>
    </location>
</feature>
<feature type="repeat" description="1-62">
    <location>
        <begin position="591"/>
        <end position="596"/>
    </location>
</feature>
<feature type="repeat" description="1-63">
    <location>
        <begin position="604"/>
        <end position="609"/>
    </location>
</feature>
<feature type="repeat" description="1-64">
    <location>
        <begin position="611"/>
        <end position="616"/>
    </location>
</feature>
<feature type="repeat" description="1-65">
    <location>
        <begin position="617"/>
        <end position="622"/>
    </location>
</feature>
<feature type="repeat" description="1-66">
    <location>
        <begin position="623"/>
        <end position="628"/>
    </location>
</feature>
<feature type="repeat" description="1-67">
    <location>
        <begin position="629"/>
        <end position="634"/>
    </location>
</feature>
<feature type="repeat" description="1-68">
    <location>
        <begin position="635"/>
        <end position="640"/>
    </location>
</feature>
<feature type="repeat" description="1-69">
    <location>
        <begin position="641"/>
        <end position="646"/>
    </location>
</feature>
<feature type="repeat" description="1-70">
    <location>
        <begin position="654"/>
        <end position="659"/>
    </location>
</feature>
<feature type="repeat" description="1-71">
    <location>
        <begin position="660"/>
        <end position="665"/>
    </location>
</feature>
<feature type="repeat" description="1-72">
    <location>
        <begin position="668"/>
        <end position="673"/>
    </location>
</feature>
<feature type="repeat" description="1-73">
    <location>
        <begin position="674"/>
        <end position="679"/>
    </location>
</feature>
<feature type="repeat" description="1-74">
    <location>
        <begin position="681"/>
        <end position="686"/>
    </location>
</feature>
<feature type="repeat" description="1-75">
    <location>
        <begin position="687"/>
        <end position="692"/>
    </location>
</feature>
<feature type="repeat" description="1-76">
    <location>
        <begin position="693"/>
        <end position="698"/>
    </location>
</feature>
<feature type="repeat" description="1-77">
    <location>
        <begin position="699"/>
        <end position="704"/>
    </location>
</feature>
<feature type="repeat" description="1-78">
    <location>
        <begin position="712"/>
        <end position="717"/>
    </location>
</feature>
<feature type="repeat" description="1-79">
    <location>
        <begin position="719"/>
        <end position="724"/>
    </location>
</feature>
<feature type="repeat" description="1-80">
    <location>
        <begin position="725"/>
        <end position="730"/>
    </location>
</feature>
<feature type="repeat" description="1-81">
    <location>
        <begin position="731"/>
        <end position="736"/>
    </location>
</feature>
<feature type="repeat" description="1-82">
    <location>
        <begin position="737"/>
        <end position="742"/>
    </location>
</feature>
<feature type="repeat" description="1-83">
    <location>
        <begin position="743"/>
        <end position="748"/>
    </location>
</feature>
<feature type="repeat" description="1-84">
    <location>
        <begin position="749"/>
        <end position="754"/>
    </location>
</feature>
<feature type="repeat" description="1-85">
    <location>
        <begin position="771"/>
        <end position="776"/>
    </location>
</feature>
<feature type="repeat" description="1-86">
    <location>
        <begin position="777"/>
        <end position="782"/>
    </location>
</feature>
<feature type="repeat" description="1-87">
    <location>
        <begin position="797"/>
        <end position="802"/>
    </location>
</feature>
<feature type="repeat" description="1-88">
    <location>
        <begin position="824"/>
        <end position="829"/>
    </location>
</feature>
<feature type="region of interest" description="88 X 6 AA approximate tandem repeats">
    <location>
        <begin position="104"/>
        <end position="541"/>
    </location>
</feature>
<feature type="region of interest" description="Disordered" evidence="2">
    <location>
        <begin position="113"/>
        <end position="833"/>
    </location>
</feature>
<feature type="lipid moiety-binding region" description="GPI-anchor amidated asparagine" evidence="1">
    <location>
        <position position="1382"/>
    </location>
</feature>
<feature type="glycosylation site" description="N-linked (GlcNAc...) asparagine" evidence="1">
    <location>
        <position position="817"/>
    </location>
</feature>
<feature type="glycosylation site" description="N-linked (GlcNAc...) asparagine" evidence="1">
    <location>
        <position position="994"/>
    </location>
</feature>
<feature type="glycosylation site" description="N-linked (GlcNAc...) asparagine" evidence="1">
    <location>
        <position position="1074"/>
    </location>
</feature>
<organism>
    <name type="scientific">Candida albicans (strain SC5314 / ATCC MYA-2876)</name>
    <name type="common">Yeast</name>
    <dbReference type="NCBI Taxonomy" id="237561"/>
    <lineage>
        <taxon>Eukaryota</taxon>
        <taxon>Fungi</taxon>
        <taxon>Dikarya</taxon>
        <taxon>Ascomycota</taxon>
        <taxon>Saccharomycotina</taxon>
        <taxon>Pichiomycetes</taxon>
        <taxon>Debaryomycetaceae</taxon>
        <taxon>Candida/Lodderomyces clade</taxon>
        <taxon>Candida</taxon>
    </lineage>
</organism>
<name>PGA55_CANAL</name>
<dbReference type="EMBL" id="CP017624">
    <property type="protein sequence ID" value="AOW27886.1"/>
    <property type="molecule type" value="Genomic_DNA"/>
</dbReference>
<dbReference type="RefSeq" id="XP_712591.2">
    <property type="nucleotide sequence ID" value="XM_707498.2"/>
</dbReference>
<dbReference type="STRING" id="237561.Q59SG9"/>
<dbReference type="GlyCosmos" id="Q59SG9">
    <property type="glycosylation" value="3 sites, No reported glycans"/>
</dbReference>
<dbReference type="EnsemblFungi" id="C2_08980C_A-T">
    <property type="protein sequence ID" value="C2_08980C_A-T-p1"/>
    <property type="gene ID" value="C2_08980C_A"/>
</dbReference>
<dbReference type="GeneID" id="3645784"/>
<dbReference type="KEGG" id="cal:CAALFM_C208980CA"/>
<dbReference type="CGD" id="CAL0000189083">
    <property type="gene designation" value="PGA55"/>
</dbReference>
<dbReference type="VEuPathDB" id="FungiDB:C2_08980C_A"/>
<dbReference type="HOGENOM" id="CLU_006027_0_0_1"/>
<dbReference type="InParanoid" id="Q59SG9"/>
<dbReference type="OrthoDB" id="4026032at2759"/>
<dbReference type="PRO" id="PR:Q59SG9"/>
<dbReference type="Proteomes" id="UP000000559">
    <property type="component" value="Chromosome 2"/>
</dbReference>
<dbReference type="GO" id="GO:0005886">
    <property type="term" value="C:plasma membrane"/>
    <property type="evidence" value="ECO:0007669"/>
    <property type="project" value="UniProtKB-SubCell"/>
</dbReference>
<dbReference type="GO" id="GO:0098552">
    <property type="term" value="C:side of membrane"/>
    <property type="evidence" value="ECO:0007669"/>
    <property type="project" value="UniProtKB-KW"/>
</dbReference>